<reference key="1">
    <citation type="journal article" date="2008" name="J. Bacteriol.">
        <title>Genome sequence of a nephritogenic and highly transformable M49 strain of Streptococcus pyogenes.</title>
        <authorList>
            <person name="McShan W.M."/>
            <person name="Ferretti J.J."/>
            <person name="Karasawa T."/>
            <person name="Suvorov A.N."/>
            <person name="Lin S."/>
            <person name="Qin B."/>
            <person name="Jia H."/>
            <person name="Kenton S."/>
            <person name="Najar F."/>
            <person name="Wu H."/>
            <person name="Scott J."/>
            <person name="Roe B.A."/>
            <person name="Savic D.J."/>
        </authorList>
    </citation>
    <scope>NUCLEOTIDE SEQUENCE [LARGE SCALE GENOMIC DNA]</scope>
    <source>
        <strain>NZ131</strain>
    </source>
</reference>
<organism>
    <name type="scientific">Streptococcus pyogenes serotype M49 (strain NZ131)</name>
    <dbReference type="NCBI Taxonomy" id="471876"/>
    <lineage>
        <taxon>Bacteria</taxon>
        <taxon>Bacillati</taxon>
        <taxon>Bacillota</taxon>
        <taxon>Bacilli</taxon>
        <taxon>Lactobacillales</taxon>
        <taxon>Streptococcaceae</taxon>
        <taxon>Streptococcus</taxon>
    </lineage>
</organism>
<proteinExistence type="inferred from homology"/>
<protein>
    <recommendedName>
        <fullName evidence="1">Replication initiation control protein YabA</fullName>
    </recommendedName>
</protein>
<dbReference type="EMBL" id="CP000829">
    <property type="protein sequence ID" value="ACI60665.1"/>
    <property type="molecule type" value="Genomic_DNA"/>
</dbReference>
<dbReference type="SMR" id="B5XK03"/>
<dbReference type="KEGG" id="soz:Spy49_0329"/>
<dbReference type="HOGENOM" id="CLU_157169_0_0_9"/>
<dbReference type="Proteomes" id="UP000001039">
    <property type="component" value="Chromosome"/>
</dbReference>
<dbReference type="GO" id="GO:0009295">
    <property type="term" value="C:nucleoid"/>
    <property type="evidence" value="ECO:0007669"/>
    <property type="project" value="UniProtKB-SubCell"/>
</dbReference>
<dbReference type="GO" id="GO:0006260">
    <property type="term" value="P:DNA replication"/>
    <property type="evidence" value="ECO:0007669"/>
    <property type="project" value="UniProtKB-UniRule"/>
</dbReference>
<dbReference type="HAMAP" id="MF_01159">
    <property type="entry name" value="YabA"/>
    <property type="match status" value="1"/>
</dbReference>
<dbReference type="InterPro" id="IPR010377">
    <property type="entry name" value="YabA"/>
</dbReference>
<dbReference type="NCBIfam" id="NF009640">
    <property type="entry name" value="PRK13169.1-1"/>
    <property type="match status" value="1"/>
</dbReference>
<dbReference type="Pfam" id="PF06156">
    <property type="entry name" value="YabA"/>
    <property type="match status" value="1"/>
</dbReference>
<dbReference type="PIRSF" id="PIRSF021439">
    <property type="entry name" value="DUF972"/>
    <property type="match status" value="1"/>
</dbReference>
<sequence>MNKKELFDAFDGFSQNLMVTLAEIEAMKKQVQSLVEENTILRLENTKLRERLSHLEHETVAKNPSKQRKDHLEGIYDEGFHICNFFYGQRRENDEECMFCRELLDRK</sequence>
<keyword id="KW-0963">Cytoplasm</keyword>
<keyword id="KW-0235">DNA replication</keyword>
<keyword id="KW-0236">DNA replication inhibitor</keyword>
<keyword id="KW-0479">Metal-binding</keyword>
<keyword id="KW-0862">Zinc</keyword>
<name>YABA_STRPZ</name>
<gene>
    <name evidence="1" type="primary">yabA</name>
    <name type="ordered locus">Spy49_0329</name>
</gene>
<feature type="chain" id="PRO_1000137838" description="Replication initiation control protein YabA">
    <location>
        <begin position="1"/>
        <end position="107"/>
    </location>
</feature>
<feature type="binding site" evidence="1">
    <location>
        <position position="81"/>
    </location>
    <ligand>
        <name>Zn(2+)</name>
        <dbReference type="ChEBI" id="CHEBI:29105"/>
    </ligand>
</feature>
<feature type="binding site" evidence="1">
    <location>
        <position position="83"/>
    </location>
    <ligand>
        <name>Zn(2+)</name>
        <dbReference type="ChEBI" id="CHEBI:29105"/>
    </ligand>
</feature>
<feature type="binding site" evidence="1">
    <location>
        <position position="97"/>
    </location>
    <ligand>
        <name>Zn(2+)</name>
        <dbReference type="ChEBI" id="CHEBI:29105"/>
    </ligand>
</feature>
<feature type="binding site" evidence="1">
    <location>
        <position position="100"/>
    </location>
    <ligand>
        <name>Zn(2+)</name>
        <dbReference type="ChEBI" id="CHEBI:29105"/>
    </ligand>
</feature>
<evidence type="ECO:0000255" key="1">
    <source>
        <dbReference type="HAMAP-Rule" id="MF_01159"/>
    </source>
</evidence>
<comment type="function">
    <text evidence="1">Involved in control of chromosome replication initiation. Inhibits the cooperative binding of DnaA to the oriC region, thus negatively regulating initiation of chromosome replication. Inhibits the ability of DnaA-ATP to form a helix on DNA; does not disassemble preformed DnaA-DNA helices. Decreases the residence time of DnaA on the chromosome at its binding sites (oriC, replication forks and promoter-binding sites). Tethers DnaA to the replication machinery via the DNA polymerase beta sliding clamp subunit (dnaN). Associates with oriC and other DnaA targets on the chromosome in a DnaA-dependent manner.</text>
</comment>
<comment type="cofactor">
    <cofactor evidence="1">
        <name>Zn(2+)</name>
        <dbReference type="ChEBI" id="CHEBI:29105"/>
    </cofactor>
    <text evidence="1">Binds 1 zinc ion per subunit.</text>
</comment>
<comment type="subunit">
    <text evidence="1">Homotetramer. Interacts with both DnaA and DnaN, acting as a bridge between these two proteins.</text>
</comment>
<comment type="subcellular location">
    <subcellularLocation>
        <location evidence="1">Cytoplasm</location>
        <location evidence="1">Nucleoid</location>
    </subcellularLocation>
    <text evidence="1">Localizes in tight foci, which correspond to the replisome at mid-cell throughout the cell cycle.</text>
</comment>
<comment type="similarity">
    <text evidence="1">Belongs to the YabA family.</text>
</comment>
<accession>B5XK03</accession>